<accession>A5WAA7</accession>
<sequence length="354" mass="38898">MTALKNDRFLRALLKQPVDVTPVWMMRQAGRYLPEYRASRAKAGDFMSLCMNPQFACEVTLQPLDRYPLDAAILFSDILTIPDAMGLGLYFETGEGPRFKKVISTPADIEALPVPDPQKDLGYVMDAVSTIRRELNGRVPLIGFSGSPWTLATYMVEGGSSKDFRKTKAMAYDNPQALHLLLDKLAQSVTSYLNGQILAGAQAVQIFDTWGGNLSAAAYQEFSLAYMRKIVSGLIREHEGRKVPVILFTKNGGLWLESIADAGADALGLDWTCEIGDARRRVGDKVALQGNMDPTVLYAKPEAIRKEVARILASYGHGTGHVFNLGHGITPEVDPEHAGVFINAVHELSAQYHQ</sequence>
<keyword id="KW-0963">Cytoplasm</keyword>
<keyword id="KW-0210">Decarboxylase</keyword>
<keyword id="KW-0456">Lyase</keyword>
<keyword id="KW-0627">Porphyrin biosynthesis</keyword>
<name>DCUP_PSEP1</name>
<evidence type="ECO:0000255" key="1">
    <source>
        <dbReference type="HAMAP-Rule" id="MF_00218"/>
    </source>
</evidence>
<protein>
    <recommendedName>
        <fullName evidence="1">Uroporphyrinogen decarboxylase</fullName>
        <shortName evidence="1">UPD</shortName>
        <shortName evidence="1">URO-D</shortName>
        <ecNumber evidence="1">4.1.1.37</ecNumber>
    </recommendedName>
</protein>
<comment type="function">
    <text evidence="1">Catalyzes the decarboxylation of four acetate groups of uroporphyrinogen-III to yield coproporphyrinogen-III.</text>
</comment>
<comment type="catalytic activity">
    <reaction evidence="1">
        <text>uroporphyrinogen III + 4 H(+) = coproporphyrinogen III + 4 CO2</text>
        <dbReference type="Rhea" id="RHEA:19865"/>
        <dbReference type="ChEBI" id="CHEBI:15378"/>
        <dbReference type="ChEBI" id="CHEBI:16526"/>
        <dbReference type="ChEBI" id="CHEBI:57308"/>
        <dbReference type="ChEBI" id="CHEBI:57309"/>
        <dbReference type="EC" id="4.1.1.37"/>
    </reaction>
</comment>
<comment type="pathway">
    <text evidence="1">Porphyrin-containing compound metabolism; protoporphyrin-IX biosynthesis; coproporphyrinogen-III from 5-aminolevulinate: step 4/4.</text>
</comment>
<comment type="subunit">
    <text evidence="1">Homodimer.</text>
</comment>
<comment type="subcellular location">
    <subcellularLocation>
        <location evidence="1">Cytoplasm</location>
    </subcellularLocation>
</comment>
<comment type="similarity">
    <text evidence="1">Belongs to the uroporphyrinogen decarboxylase family.</text>
</comment>
<proteinExistence type="inferred from homology"/>
<dbReference type="EC" id="4.1.1.37" evidence="1"/>
<dbReference type="EMBL" id="CP000712">
    <property type="protein sequence ID" value="ABQ81067.1"/>
    <property type="molecule type" value="Genomic_DNA"/>
</dbReference>
<dbReference type="SMR" id="A5WAA7"/>
<dbReference type="KEGG" id="ppf:Pput_4947"/>
<dbReference type="eggNOG" id="COG0407">
    <property type="taxonomic scope" value="Bacteria"/>
</dbReference>
<dbReference type="HOGENOM" id="CLU_040933_0_0_6"/>
<dbReference type="UniPathway" id="UPA00251">
    <property type="reaction ID" value="UER00321"/>
</dbReference>
<dbReference type="GO" id="GO:0005829">
    <property type="term" value="C:cytosol"/>
    <property type="evidence" value="ECO:0007669"/>
    <property type="project" value="TreeGrafter"/>
</dbReference>
<dbReference type="GO" id="GO:0004853">
    <property type="term" value="F:uroporphyrinogen decarboxylase activity"/>
    <property type="evidence" value="ECO:0007669"/>
    <property type="project" value="UniProtKB-UniRule"/>
</dbReference>
<dbReference type="GO" id="GO:0019353">
    <property type="term" value="P:protoporphyrinogen IX biosynthetic process from glutamate"/>
    <property type="evidence" value="ECO:0007669"/>
    <property type="project" value="TreeGrafter"/>
</dbReference>
<dbReference type="CDD" id="cd00717">
    <property type="entry name" value="URO-D"/>
    <property type="match status" value="1"/>
</dbReference>
<dbReference type="FunFam" id="3.20.20.210:FF:000001">
    <property type="entry name" value="Uroporphyrinogen decarboxylase"/>
    <property type="match status" value="1"/>
</dbReference>
<dbReference type="Gene3D" id="3.20.20.210">
    <property type="match status" value="1"/>
</dbReference>
<dbReference type="HAMAP" id="MF_00218">
    <property type="entry name" value="URO_D"/>
    <property type="match status" value="1"/>
</dbReference>
<dbReference type="InterPro" id="IPR038071">
    <property type="entry name" value="UROD/MetE-like_sf"/>
</dbReference>
<dbReference type="InterPro" id="IPR006361">
    <property type="entry name" value="Uroporphyrinogen_deCO2ase_HemE"/>
</dbReference>
<dbReference type="InterPro" id="IPR000257">
    <property type="entry name" value="Uroporphyrinogen_deCOase"/>
</dbReference>
<dbReference type="NCBIfam" id="TIGR01464">
    <property type="entry name" value="hemE"/>
    <property type="match status" value="1"/>
</dbReference>
<dbReference type="PANTHER" id="PTHR21091">
    <property type="entry name" value="METHYLTETRAHYDROFOLATE:HOMOCYSTEINE METHYLTRANSFERASE RELATED"/>
    <property type="match status" value="1"/>
</dbReference>
<dbReference type="PANTHER" id="PTHR21091:SF169">
    <property type="entry name" value="UROPORPHYRINOGEN DECARBOXYLASE"/>
    <property type="match status" value="1"/>
</dbReference>
<dbReference type="Pfam" id="PF01208">
    <property type="entry name" value="URO-D"/>
    <property type="match status" value="1"/>
</dbReference>
<dbReference type="SUPFAM" id="SSF51726">
    <property type="entry name" value="UROD/MetE-like"/>
    <property type="match status" value="1"/>
</dbReference>
<dbReference type="PROSITE" id="PS00906">
    <property type="entry name" value="UROD_1"/>
    <property type="match status" value="1"/>
</dbReference>
<dbReference type="PROSITE" id="PS00907">
    <property type="entry name" value="UROD_2"/>
    <property type="match status" value="1"/>
</dbReference>
<gene>
    <name evidence="1" type="primary">hemE</name>
    <name type="ordered locus">Pput_4947</name>
</gene>
<organism>
    <name type="scientific">Pseudomonas putida (strain ATCC 700007 / DSM 6899 / JCM 31910 / BCRC 17059 / LMG 24140 / F1)</name>
    <dbReference type="NCBI Taxonomy" id="351746"/>
    <lineage>
        <taxon>Bacteria</taxon>
        <taxon>Pseudomonadati</taxon>
        <taxon>Pseudomonadota</taxon>
        <taxon>Gammaproteobacteria</taxon>
        <taxon>Pseudomonadales</taxon>
        <taxon>Pseudomonadaceae</taxon>
        <taxon>Pseudomonas</taxon>
    </lineage>
</organism>
<reference key="1">
    <citation type="submission" date="2007-05" db="EMBL/GenBank/DDBJ databases">
        <title>Complete sequence of Pseudomonas putida F1.</title>
        <authorList>
            <consortium name="US DOE Joint Genome Institute"/>
            <person name="Copeland A."/>
            <person name="Lucas S."/>
            <person name="Lapidus A."/>
            <person name="Barry K."/>
            <person name="Detter J.C."/>
            <person name="Glavina del Rio T."/>
            <person name="Hammon N."/>
            <person name="Israni S."/>
            <person name="Dalin E."/>
            <person name="Tice H."/>
            <person name="Pitluck S."/>
            <person name="Chain P."/>
            <person name="Malfatti S."/>
            <person name="Shin M."/>
            <person name="Vergez L."/>
            <person name="Schmutz J."/>
            <person name="Larimer F."/>
            <person name="Land M."/>
            <person name="Hauser L."/>
            <person name="Kyrpides N."/>
            <person name="Lykidis A."/>
            <person name="Parales R."/>
            <person name="Richardson P."/>
        </authorList>
    </citation>
    <scope>NUCLEOTIDE SEQUENCE [LARGE SCALE GENOMIC DNA]</scope>
    <source>
        <strain>ATCC 700007 / DSM 6899 / JCM 31910 / BCRC 17059 / LMG 24140 / F1</strain>
    </source>
</reference>
<feature type="chain" id="PRO_1000023951" description="Uroporphyrinogen decarboxylase">
    <location>
        <begin position="1"/>
        <end position="354"/>
    </location>
</feature>
<feature type="binding site" evidence="1">
    <location>
        <begin position="27"/>
        <end position="31"/>
    </location>
    <ligand>
        <name>substrate</name>
    </ligand>
</feature>
<feature type="binding site" evidence="1">
    <location>
        <position position="77"/>
    </location>
    <ligand>
        <name>substrate</name>
    </ligand>
</feature>
<feature type="binding site" evidence="1">
    <location>
        <position position="154"/>
    </location>
    <ligand>
        <name>substrate</name>
    </ligand>
</feature>
<feature type="binding site" evidence="1">
    <location>
        <position position="209"/>
    </location>
    <ligand>
        <name>substrate</name>
    </ligand>
</feature>
<feature type="binding site" evidence="1">
    <location>
        <position position="327"/>
    </location>
    <ligand>
        <name>substrate</name>
    </ligand>
</feature>
<feature type="site" description="Transition state stabilizer" evidence="1">
    <location>
        <position position="77"/>
    </location>
</feature>